<evidence type="ECO:0000255" key="1">
    <source>
        <dbReference type="HAMAP-Rule" id="MF_00580"/>
    </source>
</evidence>
<keyword id="KW-0143">Chaperone</keyword>
<keyword id="KW-0963">Cytoplasm</keyword>
<keyword id="KW-1185">Reference proteome</keyword>
<protein>
    <recommendedName>
        <fullName evidence="1">Co-chaperonin GroES</fullName>
    </recommendedName>
    <alternativeName>
        <fullName evidence="1">10 kDa chaperonin</fullName>
    </alternativeName>
    <alternativeName>
        <fullName evidence="1">Chaperonin-10</fullName>
        <shortName evidence="1">Cpn10</shortName>
    </alternativeName>
</protein>
<dbReference type="EMBL" id="AE014295">
    <property type="protein sequence ID" value="AAN25349.1"/>
    <property type="molecule type" value="Genomic_DNA"/>
</dbReference>
<dbReference type="RefSeq" id="NP_696713.1">
    <property type="nucleotide sequence ID" value="NC_004307.2"/>
</dbReference>
<dbReference type="RefSeq" id="WP_007053011.1">
    <property type="nucleotide sequence ID" value="NC_004307.2"/>
</dbReference>
<dbReference type="SMR" id="Q8CY47"/>
<dbReference type="STRING" id="206672.BL1558"/>
<dbReference type="EnsemblBacteria" id="AAN25349">
    <property type="protein sequence ID" value="AAN25349"/>
    <property type="gene ID" value="BL1558"/>
</dbReference>
<dbReference type="GeneID" id="69578922"/>
<dbReference type="KEGG" id="blo:BL1558"/>
<dbReference type="PATRIC" id="fig|206672.9.peg.1613"/>
<dbReference type="HOGENOM" id="CLU_132825_2_0_11"/>
<dbReference type="OrthoDB" id="9806791at2"/>
<dbReference type="PhylomeDB" id="Q8CY47"/>
<dbReference type="Proteomes" id="UP000000439">
    <property type="component" value="Chromosome"/>
</dbReference>
<dbReference type="GO" id="GO:0005737">
    <property type="term" value="C:cytoplasm"/>
    <property type="evidence" value="ECO:0007669"/>
    <property type="project" value="UniProtKB-SubCell"/>
</dbReference>
<dbReference type="GO" id="GO:0005524">
    <property type="term" value="F:ATP binding"/>
    <property type="evidence" value="ECO:0007669"/>
    <property type="project" value="InterPro"/>
</dbReference>
<dbReference type="GO" id="GO:0046872">
    <property type="term" value="F:metal ion binding"/>
    <property type="evidence" value="ECO:0007669"/>
    <property type="project" value="TreeGrafter"/>
</dbReference>
<dbReference type="GO" id="GO:0044183">
    <property type="term" value="F:protein folding chaperone"/>
    <property type="evidence" value="ECO:0007669"/>
    <property type="project" value="InterPro"/>
</dbReference>
<dbReference type="GO" id="GO:0051087">
    <property type="term" value="F:protein-folding chaperone binding"/>
    <property type="evidence" value="ECO:0007669"/>
    <property type="project" value="TreeGrafter"/>
</dbReference>
<dbReference type="GO" id="GO:0051082">
    <property type="term" value="F:unfolded protein binding"/>
    <property type="evidence" value="ECO:0007669"/>
    <property type="project" value="TreeGrafter"/>
</dbReference>
<dbReference type="GO" id="GO:0051085">
    <property type="term" value="P:chaperone cofactor-dependent protein refolding"/>
    <property type="evidence" value="ECO:0007669"/>
    <property type="project" value="TreeGrafter"/>
</dbReference>
<dbReference type="CDD" id="cd00320">
    <property type="entry name" value="cpn10"/>
    <property type="match status" value="1"/>
</dbReference>
<dbReference type="FunFam" id="2.30.33.40:FF:000001">
    <property type="entry name" value="10 kDa chaperonin"/>
    <property type="match status" value="1"/>
</dbReference>
<dbReference type="Gene3D" id="2.30.33.40">
    <property type="entry name" value="GroES chaperonin"/>
    <property type="match status" value="1"/>
</dbReference>
<dbReference type="HAMAP" id="MF_00580">
    <property type="entry name" value="CH10"/>
    <property type="match status" value="1"/>
</dbReference>
<dbReference type="InterPro" id="IPR020818">
    <property type="entry name" value="Chaperonin_GroES"/>
</dbReference>
<dbReference type="InterPro" id="IPR037124">
    <property type="entry name" value="Chaperonin_GroES_sf"/>
</dbReference>
<dbReference type="InterPro" id="IPR018369">
    <property type="entry name" value="Chaprnonin_Cpn10_CS"/>
</dbReference>
<dbReference type="InterPro" id="IPR011032">
    <property type="entry name" value="GroES-like_sf"/>
</dbReference>
<dbReference type="NCBIfam" id="NF001530">
    <property type="entry name" value="PRK00364.1-6"/>
    <property type="match status" value="1"/>
</dbReference>
<dbReference type="NCBIfam" id="NF001531">
    <property type="entry name" value="PRK00364.2-2"/>
    <property type="match status" value="1"/>
</dbReference>
<dbReference type="NCBIfam" id="NF001533">
    <property type="entry name" value="PRK00364.2-4"/>
    <property type="match status" value="1"/>
</dbReference>
<dbReference type="NCBIfam" id="NF001534">
    <property type="entry name" value="PRK00364.2-5"/>
    <property type="match status" value="1"/>
</dbReference>
<dbReference type="PANTHER" id="PTHR10772">
    <property type="entry name" value="10 KDA HEAT SHOCK PROTEIN"/>
    <property type="match status" value="1"/>
</dbReference>
<dbReference type="PANTHER" id="PTHR10772:SF58">
    <property type="entry name" value="CO-CHAPERONIN GROES"/>
    <property type="match status" value="1"/>
</dbReference>
<dbReference type="Pfam" id="PF00166">
    <property type="entry name" value="Cpn10"/>
    <property type="match status" value="1"/>
</dbReference>
<dbReference type="PRINTS" id="PR00297">
    <property type="entry name" value="CHAPERONIN10"/>
</dbReference>
<dbReference type="SMART" id="SM00883">
    <property type="entry name" value="Cpn10"/>
    <property type="match status" value="1"/>
</dbReference>
<dbReference type="SUPFAM" id="SSF50129">
    <property type="entry name" value="GroES-like"/>
    <property type="match status" value="1"/>
</dbReference>
<dbReference type="PROSITE" id="PS00681">
    <property type="entry name" value="CHAPERONINS_CPN10"/>
    <property type="match status" value="1"/>
</dbReference>
<name>CH10_BIFLO</name>
<organism>
    <name type="scientific">Bifidobacterium longum (strain NCC 2705)</name>
    <dbReference type="NCBI Taxonomy" id="206672"/>
    <lineage>
        <taxon>Bacteria</taxon>
        <taxon>Bacillati</taxon>
        <taxon>Actinomycetota</taxon>
        <taxon>Actinomycetes</taxon>
        <taxon>Bifidobacteriales</taxon>
        <taxon>Bifidobacteriaceae</taxon>
        <taxon>Bifidobacterium</taxon>
    </lineage>
</organism>
<reference key="1">
    <citation type="journal article" date="2002" name="Proc. Natl. Acad. Sci. U.S.A.">
        <title>The genome sequence of Bifidobacterium longum reflects its adaptation to the human gastrointestinal tract.</title>
        <authorList>
            <person name="Schell M.A."/>
            <person name="Karmirantzou M."/>
            <person name="Snel B."/>
            <person name="Vilanova D."/>
            <person name="Berger B."/>
            <person name="Pessi G."/>
            <person name="Zwahlen M.-C."/>
            <person name="Desiere F."/>
            <person name="Bork P."/>
            <person name="Delley M."/>
            <person name="Pridmore R.D."/>
            <person name="Arigoni F."/>
        </authorList>
    </citation>
    <scope>NUCLEOTIDE SEQUENCE [LARGE SCALE GENOMIC DNA]</scope>
    <source>
        <strain>NCC 2705</strain>
    </source>
</reference>
<comment type="function">
    <text evidence="1">Together with the chaperonin GroEL, plays an essential role in assisting protein folding. The GroEL-GroES system forms a nano-cage that allows encapsulation of the non-native substrate proteins and provides a physical environment optimized to promote and accelerate protein folding. GroES binds to the apical surface of the GroEL ring, thereby capping the opening of the GroEL channel.</text>
</comment>
<comment type="subunit">
    <text evidence="1">Heptamer of 7 subunits arranged in a ring. Interacts with the chaperonin GroEL.</text>
</comment>
<comment type="subcellular location">
    <subcellularLocation>
        <location evidence="1">Cytoplasm</location>
    </subcellularLocation>
</comment>
<comment type="similarity">
    <text evidence="1">Belongs to the GroES chaperonin family.</text>
</comment>
<proteinExistence type="inferred from homology"/>
<feature type="chain" id="PRO_0000174700" description="Co-chaperonin GroES">
    <location>
        <begin position="1"/>
        <end position="97"/>
    </location>
</feature>
<accession>Q8CY47</accession>
<gene>
    <name evidence="1" type="primary">groES</name>
    <name evidence="1" type="synonym">groS</name>
    <name type="ordered locus">BL1558</name>
</gene>
<sequence>MSIKLTPLEDKIIVKQAEAQTQTASGLYIPDNAKEKPQQGEVLAVGPGRRDDKGERIPMDVKVGDKVLYSKYGGTEVHYEGEDYLIVGARDILAILG</sequence>